<sequence>MGKYFGTDGVRGEANVELTPELAFKLGRFGGYVLSQHETERPKVFVARDTRISGEMLESALIAGLLSVGIEVYKLGVLATPGVSYLVRTEKASAGVMISASHNPALDNGIKFFGNDGFKLADDQELEIEALLDAPEDTLPRPSAEGLGTLVDYPEGLRKYEKFLVTTGTDLSGMTVALDTANGAASVSARDVFLDLNAEIAVIGEKPNGLNINDGVGSTHPEQLQELVKETGADLGLAFDGDSDRLIAVDETGEIVDGDRIMFIIGKYLSEKGLLAHNTIVTTVMSNLGFHKALDKQGINKAITAVGDRYVVEEMRSSGYNLGGEQSGHVIIMDYNTTGDGQLTAIQLAKVMKETGKSLSELAAEVTIYPQKLVNIRVENSMKDRAMEVPAIANIIAKMEDEMAGNGRILVRPSGTEPLLRVMAEAPTDAEVDYYVDTIADVVRTEIGCDN</sequence>
<gene>
    <name evidence="1" type="primary">glmM</name>
    <name type="ordered locus">M6_Spy0788</name>
</gene>
<dbReference type="EC" id="5.4.2.10" evidence="1"/>
<dbReference type="EMBL" id="CP000003">
    <property type="protein sequence ID" value="AAT86923.1"/>
    <property type="molecule type" value="Genomic_DNA"/>
</dbReference>
<dbReference type="RefSeq" id="WP_011184463.1">
    <property type="nucleotide sequence ID" value="NC_006086.1"/>
</dbReference>
<dbReference type="SMR" id="Q5XCE0"/>
<dbReference type="KEGG" id="spa:M6_Spy0788"/>
<dbReference type="HOGENOM" id="CLU_016950_7_0_9"/>
<dbReference type="Proteomes" id="UP000001167">
    <property type="component" value="Chromosome"/>
</dbReference>
<dbReference type="GO" id="GO:0005829">
    <property type="term" value="C:cytosol"/>
    <property type="evidence" value="ECO:0007669"/>
    <property type="project" value="TreeGrafter"/>
</dbReference>
<dbReference type="GO" id="GO:0000287">
    <property type="term" value="F:magnesium ion binding"/>
    <property type="evidence" value="ECO:0007669"/>
    <property type="project" value="UniProtKB-UniRule"/>
</dbReference>
<dbReference type="GO" id="GO:0008966">
    <property type="term" value="F:phosphoglucosamine mutase activity"/>
    <property type="evidence" value="ECO:0007669"/>
    <property type="project" value="UniProtKB-UniRule"/>
</dbReference>
<dbReference type="GO" id="GO:0004615">
    <property type="term" value="F:phosphomannomutase activity"/>
    <property type="evidence" value="ECO:0007669"/>
    <property type="project" value="TreeGrafter"/>
</dbReference>
<dbReference type="GO" id="GO:0005975">
    <property type="term" value="P:carbohydrate metabolic process"/>
    <property type="evidence" value="ECO:0007669"/>
    <property type="project" value="InterPro"/>
</dbReference>
<dbReference type="GO" id="GO:0009252">
    <property type="term" value="P:peptidoglycan biosynthetic process"/>
    <property type="evidence" value="ECO:0007669"/>
    <property type="project" value="TreeGrafter"/>
</dbReference>
<dbReference type="GO" id="GO:0006048">
    <property type="term" value="P:UDP-N-acetylglucosamine biosynthetic process"/>
    <property type="evidence" value="ECO:0007669"/>
    <property type="project" value="TreeGrafter"/>
</dbReference>
<dbReference type="CDD" id="cd05802">
    <property type="entry name" value="GlmM"/>
    <property type="match status" value="1"/>
</dbReference>
<dbReference type="FunFam" id="3.30.310.50:FF:000001">
    <property type="entry name" value="Phosphoglucosamine mutase"/>
    <property type="match status" value="1"/>
</dbReference>
<dbReference type="FunFam" id="3.40.120.10:FF:000001">
    <property type="entry name" value="Phosphoglucosamine mutase"/>
    <property type="match status" value="1"/>
</dbReference>
<dbReference type="FunFam" id="3.40.120.10:FF:000002">
    <property type="entry name" value="Phosphoglucosamine mutase"/>
    <property type="match status" value="1"/>
</dbReference>
<dbReference type="Gene3D" id="3.40.120.10">
    <property type="entry name" value="Alpha-D-Glucose-1,6-Bisphosphate, subunit A, domain 3"/>
    <property type="match status" value="3"/>
</dbReference>
<dbReference type="Gene3D" id="3.30.310.50">
    <property type="entry name" value="Alpha-D-phosphohexomutase, C-terminal domain"/>
    <property type="match status" value="1"/>
</dbReference>
<dbReference type="HAMAP" id="MF_01554_B">
    <property type="entry name" value="GlmM_B"/>
    <property type="match status" value="1"/>
</dbReference>
<dbReference type="InterPro" id="IPR005844">
    <property type="entry name" value="A-D-PHexomutase_a/b/a-I"/>
</dbReference>
<dbReference type="InterPro" id="IPR016055">
    <property type="entry name" value="A-D-PHexomutase_a/b/a-I/II/III"/>
</dbReference>
<dbReference type="InterPro" id="IPR005845">
    <property type="entry name" value="A-D-PHexomutase_a/b/a-II"/>
</dbReference>
<dbReference type="InterPro" id="IPR005846">
    <property type="entry name" value="A-D-PHexomutase_a/b/a-III"/>
</dbReference>
<dbReference type="InterPro" id="IPR005843">
    <property type="entry name" value="A-D-PHexomutase_C"/>
</dbReference>
<dbReference type="InterPro" id="IPR036900">
    <property type="entry name" value="A-D-PHexomutase_C_sf"/>
</dbReference>
<dbReference type="InterPro" id="IPR016066">
    <property type="entry name" value="A-D-PHexomutase_CS"/>
</dbReference>
<dbReference type="InterPro" id="IPR005841">
    <property type="entry name" value="Alpha-D-phosphohexomutase_SF"/>
</dbReference>
<dbReference type="InterPro" id="IPR006352">
    <property type="entry name" value="GlmM_bact"/>
</dbReference>
<dbReference type="InterPro" id="IPR050060">
    <property type="entry name" value="Phosphoglucosamine_mutase"/>
</dbReference>
<dbReference type="NCBIfam" id="TIGR01455">
    <property type="entry name" value="glmM"/>
    <property type="match status" value="1"/>
</dbReference>
<dbReference type="PANTHER" id="PTHR42946:SF1">
    <property type="entry name" value="PHOSPHOGLUCOMUTASE (ALPHA-D-GLUCOSE-1,6-BISPHOSPHATE-DEPENDENT)"/>
    <property type="match status" value="1"/>
</dbReference>
<dbReference type="PANTHER" id="PTHR42946">
    <property type="entry name" value="PHOSPHOHEXOSE MUTASE"/>
    <property type="match status" value="1"/>
</dbReference>
<dbReference type="Pfam" id="PF02878">
    <property type="entry name" value="PGM_PMM_I"/>
    <property type="match status" value="1"/>
</dbReference>
<dbReference type="Pfam" id="PF02879">
    <property type="entry name" value="PGM_PMM_II"/>
    <property type="match status" value="1"/>
</dbReference>
<dbReference type="Pfam" id="PF02880">
    <property type="entry name" value="PGM_PMM_III"/>
    <property type="match status" value="1"/>
</dbReference>
<dbReference type="Pfam" id="PF00408">
    <property type="entry name" value="PGM_PMM_IV"/>
    <property type="match status" value="1"/>
</dbReference>
<dbReference type="PRINTS" id="PR00509">
    <property type="entry name" value="PGMPMM"/>
</dbReference>
<dbReference type="SUPFAM" id="SSF55957">
    <property type="entry name" value="Phosphoglucomutase, C-terminal domain"/>
    <property type="match status" value="1"/>
</dbReference>
<dbReference type="SUPFAM" id="SSF53738">
    <property type="entry name" value="Phosphoglucomutase, first 3 domains"/>
    <property type="match status" value="3"/>
</dbReference>
<dbReference type="PROSITE" id="PS00710">
    <property type="entry name" value="PGM_PMM"/>
    <property type="match status" value="1"/>
</dbReference>
<comment type="function">
    <text evidence="1">Catalyzes the conversion of glucosamine-6-phosphate to glucosamine-1-phosphate.</text>
</comment>
<comment type="catalytic activity">
    <reaction evidence="1">
        <text>alpha-D-glucosamine 1-phosphate = D-glucosamine 6-phosphate</text>
        <dbReference type="Rhea" id="RHEA:23424"/>
        <dbReference type="ChEBI" id="CHEBI:58516"/>
        <dbReference type="ChEBI" id="CHEBI:58725"/>
        <dbReference type="EC" id="5.4.2.10"/>
    </reaction>
</comment>
<comment type="cofactor">
    <cofactor evidence="1">
        <name>Mg(2+)</name>
        <dbReference type="ChEBI" id="CHEBI:18420"/>
    </cofactor>
    <text evidence="1">Binds 1 Mg(2+) ion per subunit.</text>
</comment>
<comment type="PTM">
    <text evidence="1">Activated by phosphorylation.</text>
</comment>
<comment type="similarity">
    <text evidence="1">Belongs to the phosphohexose mutase family.</text>
</comment>
<name>GLMM_STRP6</name>
<keyword id="KW-0413">Isomerase</keyword>
<keyword id="KW-0460">Magnesium</keyword>
<keyword id="KW-0479">Metal-binding</keyword>
<keyword id="KW-0597">Phosphoprotein</keyword>
<organism>
    <name type="scientific">Streptococcus pyogenes serotype M6 (strain ATCC BAA-946 / MGAS10394)</name>
    <dbReference type="NCBI Taxonomy" id="286636"/>
    <lineage>
        <taxon>Bacteria</taxon>
        <taxon>Bacillati</taxon>
        <taxon>Bacillota</taxon>
        <taxon>Bacilli</taxon>
        <taxon>Lactobacillales</taxon>
        <taxon>Streptococcaceae</taxon>
        <taxon>Streptococcus</taxon>
    </lineage>
</organism>
<feature type="chain" id="PRO_0000147979" description="Phosphoglucosamine mutase">
    <location>
        <begin position="1"/>
        <end position="451"/>
    </location>
</feature>
<feature type="active site" description="Phosphoserine intermediate" evidence="1">
    <location>
        <position position="101"/>
    </location>
</feature>
<feature type="binding site" description="via phosphate group" evidence="1">
    <location>
        <position position="101"/>
    </location>
    <ligand>
        <name>Mg(2+)</name>
        <dbReference type="ChEBI" id="CHEBI:18420"/>
    </ligand>
</feature>
<feature type="binding site" evidence="1">
    <location>
        <position position="240"/>
    </location>
    <ligand>
        <name>Mg(2+)</name>
        <dbReference type="ChEBI" id="CHEBI:18420"/>
    </ligand>
</feature>
<feature type="binding site" evidence="1">
    <location>
        <position position="242"/>
    </location>
    <ligand>
        <name>Mg(2+)</name>
        <dbReference type="ChEBI" id="CHEBI:18420"/>
    </ligand>
</feature>
<feature type="binding site" evidence="1">
    <location>
        <position position="244"/>
    </location>
    <ligand>
        <name>Mg(2+)</name>
        <dbReference type="ChEBI" id="CHEBI:18420"/>
    </ligand>
</feature>
<feature type="modified residue" description="Phosphoserine" evidence="1">
    <location>
        <position position="101"/>
    </location>
</feature>
<evidence type="ECO:0000255" key="1">
    <source>
        <dbReference type="HAMAP-Rule" id="MF_01554"/>
    </source>
</evidence>
<reference key="1">
    <citation type="journal article" date="2004" name="J. Infect. Dis.">
        <title>Progress toward characterization of the group A Streptococcus metagenome: complete genome sequence of a macrolide-resistant serotype M6 strain.</title>
        <authorList>
            <person name="Banks D.J."/>
            <person name="Porcella S.F."/>
            <person name="Barbian K.D."/>
            <person name="Beres S.B."/>
            <person name="Philips L.E."/>
            <person name="Voyich J.M."/>
            <person name="DeLeo F.R."/>
            <person name="Martin J.M."/>
            <person name="Somerville G.A."/>
            <person name="Musser J.M."/>
        </authorList>
    </citation>
    <scope>NUCLEOTIDE SEQUENCE [LARGE SCALE GENOMIC DNA]</scope>
    <source>
        <strain>ATCC BAA-946 / MGAS10394</strain>
    </source>
</reference>
<proteinExistence type="inferred from homology"/>
<protein>
    <recommendedName>
        <fullName evidence="1">Phosphoglucosamine mutase</fullName>
        <ecNumber evidence="1">5.4.2.10</ecNumber>
    </recommendedName>
</protein>
<accession>Q5XCE0</accession>